<keyword id="KW-0028">Amino-acid biosynthesis</keyword>
<keyword id="KW-0057">Aromatic amino acid biosynthesis</keyword>
<keyword id="KW-0963">Cytoplasm</keyword>
<keyword id="KW-0808">Transferase</keyword>
<gene>
    <name evidence="1" type="primary">aroA</name>
    <name type="ordered locus">DehaBAV1_0440</name>
</gene>
<feature type="chain" id="PRO_1000124682" description="3-phosphoshikimate 1-carboxyvinyltransferase">
    <location>
        <begin position="1"/>
        <end position="420"/>
    </location>
</feature>
<feature type="active site" description="Proton acceptor" evidence="1">
    <location>
        <position position="303"/>
    </location>
</feature>
<feature type="binding site" evidence="1">
    <location>
        <position position="20"/>
    </location>
    <ligand>
        <name>3-phosphoshikimate</name>
        <dbReference type="ChEBI" id="CHEBI:145989"/>
    </ligand>
</feature>
<feature type="binding site" evidence="1">
    <location>
        <position position="20"/>
    </location>
    <ligand>
        <name>phosphoenolpyruvate</name>
        <dbReference type="ChEBI" id="CHEBI:58702"/>
    </ligand>
</feature>
<feature type="binding site" evidence="1">
    <location>
        <position position="21"/>
    </location>
    <ligand>
        <name>3-phosphoshikimate</name>
        <dbReference type="ChEBI" id="CHEBI:145989"/>
    </ligand>
</feature>
<feature type="binding site" evidence="1">
    <location>
        <position position="25"/>
    </location>
    <ligand>
        <name>3-phosphoshikimate</name>
        <dbReference type="ChEBI" id="CHEBI:145989"/>
    </ligand>
</feature>
<feature type="binding site" evidence="1">
    <location>
        <position position="119"/>
    </location>
    <ligand>
        <name>phosphoenolpyruvate</name>
        <dbReference type="ChEBI" id="CHEBI:58702"/>
    </ligand>
</feature>
<feature type="binding site" evidence="1">
    <location>
        <position position="161"/>
    </location>
    <ligand>
        <name>3-phosphoshikimate</name>
        <dbReference type="ChEBI" id="CHEBI:145989"/>
    </ligand>
</feature>
<feature type="binding site" evidence="1">
    <location>
        <position position="162"/>
    </location>
    <ligand>
        <name>3-phosphoshikimate</name>
        <dbReference type="ChEBI" id="CHEBI:145989"/>
    </ligand>
</feature>
<feature type="binding site" evidence="1">
    <location>
        <position position="163"/>
    </location>
    <ligand>
        <name>3-phosphoshikimate</name>
        <dbReference type="ChEBI" id="CHEBI:145989"/>
    </ligand>
</feature>
<feature type="binding site" evidence="1">
    <location>
        <position position="163"/>
    </location>
    <ligand>
        <name>phosphoenolpyruvate</name>
        <dbReference type="ChEBI" id="CHEBI:58702"/>
    </ligand>
</feature>
<feature type="binding site" evidence="1">
    <location>
        <position position="189"/>
    </location>
    <ligand>
        <name>3-phosphoshikimate</name>
        <dbReference type="ChEBI" id="CHEBI:145989"/>
    </ligand>
</feature>
<feature type="binding site" evidence="1">
    <location>
        <position position="303"/>
    </location>
    <ligand>
        <name>3-phosphoshikimate</name>
        <dbReference type="ChEBI" id="CHEBI:145989"/>
    </ligand>
</feature>
<feature type="binding site" evidence="1">
    <location>
        <position position="326"/>
    </location>
    <ligand>
        <name>3-phosphoshikimate</name>
        <dbReference type="ChEBI" id="CHEBI:145989"/>
    </ligand>
</feature>
<feature type="binding site" evidence="1">
    <location>
        <position position="330"/>
    </location>
    <ligand>
        <name>3-phosphoshikimate</name>
        <dbReference type="ChEBI" id="CHEBI:145989"/>
    </ligand>
</feature>
<feature type="binding site" evidence="1">
    <location>
        <position position="334"/>
    </location>
    <ligand>
        <name>phosphoenolpyruvate</name>
        <dbReference type="ChEBI" id="CHEBI:58702"/>
    </ligand>
</feature>
<feature type="binding site" evidence="1">
    <location>
        <position position="375"/>
    </location>
    <ligand>
        <name>phosphoenolpyruvate</name>
        <dbReference type="ChEBI" id="CHEBI:58702"/>
    </ligand>
</feature>
<feature type="binding site" evidence="1">
    <location>
        <position position="400"/>
    </location>
    <ligand>
        <name>phosphoenolpyruvate</name>
        <dbReference type="ChEBI" id="CHEBI:58702"/>
    </ligand>
</feature>
<name>AROA_DEHMB</name>
<comment type="function">
    <text evidence="1">Catalyzes the transfer of the enolpyruvyl moiety of phosphoenolpyruvate (PEP) to the 5-hydroxyl of shikimate-3-phosphate (S3P) to produce enolpyruvyl shikimate-3-phosphate and inorganic phosphate.</text>
</comment>
<comment type="catalytic activity">
    <reaction evidence="1">
        <text>3-phosphoshikimate + phosphoenolpyruvate = 5-O-(1-carboxyvinyl)-3-phosphoshikimate + phosphate</text>
        <dbReference type="Rhea" id="RHEA:21256"/>
        <dbReference type="ChEBI" id="CHEBI:43474"/>
        <dbReference type="ChEBI" id="CHEBI:57701"/>
        <dbReference type="ChEBI" id="CHEBI:58702"/>
        <dbReference type="ChEBI" id="CHEBI:145989"/>
        <dbReference type="EC" id="2.5.1.19"/>
    </reaction>
    <physiologicalReaction direction="left-to-right" evidence="1">
        <dbReference type="Rhea" id="RHEA:21257"/>
    </physiologicalReaction>
</comment>
<comment type="pathway">
    <text evidence="1">Metabolic intermediate biosynthesis; chorismate biosynthesis; chorismate from D-erythrose 4-phosphate and phosphoenolpyruvate: step 6/7.</text>
</comment>
<comment type="subunit">
    <text evidence="1">Monomer.</text>
</comment>
<comment type="subcellular location">
    <subcellularLocation>
        <location evidence="1">Cytoplasm</location>
    </subcellularLocation>
</comment>
<comment type="similarity">
    <text evidence="1">Belongs to the EPSP synthase family.</text>
</comment>
<evidence type="ECO:0000255" key="1">
    <source>
        <dbReference type="HAMAP-Rule" id="MF_00210"/>
    </source>
</evidence>
<sequence length="420" mass="44975">MKIHLDKSLPGGNIAVPSSKSYTIRGLIAAAQANGQSHIISPLIADDTLATRQVLSGLGININTDTGSESWEITGNTFKAPSGNLFCRESAATLRFMSAVCARLPFECHLLAGHSLMRRPMLPLIQALHQLGIEIETRGNTTVINGQVITRSKVSLPGNISSQYVSALMLMAPACTHGLEIHLATPPASLPYLKMTKQTLGSFGIKVHSSIDWQEISIPPQPYLPARYRVEGDWSSASSFLALGAIAAPVFISNLDTDSFQADRIMIKFLAEMGAEIESGQNWVKVNPKPLSGINADLTHSIDLLPALAVAAACAKGQSILSGVRQARIKESNRIRAVSQGLSAMGINIIEEDDRLIIEGGQPKGAEIDSFGDHRIAMAFGILGSVVGETHISDAECVTKTYPDFWKNLESLGGKVTQDV</sequence>
<accession>A5FRZ3</accession>
<reference key="1">
    <citation type="submission" date="2007-05" db="EMBL/GenBank/DDBJ databases">
        <title>Complete sequence of Dehalococcoides sp. BAV1.</title>
        <authorList>
            <consortium name="US DOE Joint Genome Institute"/>
            <person name="Copeland A."/>
            <person name="Lucas S."/>
            <person name="Lapidus A."/>
            <person name="Barry K."/>
            <person name="Detter J.C."/>
            <person name="Glavina del Rio T."/>
            <person name="Hammon N."/>
            <person name="Israni S."/>
            <person name="Pitluck S."/>
            <person name="Lowry S."/>
            <person name="Clum A."/>
            <person name="Schmutz J."/>
            <person name="Larimer F."/>
            <person name="Land M."/>
            <person name="Hauser L."/>
            <person name="Kyrpides N."/>
            <person name="Kim E."/>
            <person name="Ritalahti K.M."/>
            <person name="Loeffler F."/>
            <person name="Richardson P."/>
        </authorList>
    </citation>
    <scope>NUCLEOTIDE SEQUENCE [LARGE SCALE GENOMIC DNA]</scope>
    <source>
        <strain>ATCC BAA-2100 / JCM 16839 / KCTC 5957 / BAV1</strain>
    </source>
</reference>
<protein>
    <recommendedName>
        <fullName evidence="1">3-phosphoshikimate 1-carboxyvinyltransferase</fullName>
        <ecNumber evidence="1">2.5.1.19</ecNumber>
    </recommendedName>
    <alternativeName>
        <fullName evidence="1">5-enolpyruvylshikimate-3-phosphate synthase</fullName>
        <shortName evidence="1">EPSP synthase</shortName>
        <shortName evidence="1">EPSPS</shortName>
    </alternativeName>
</protein>
<organism>
    <name type="scientific">Dehalococcoides mccartyi (strain ATCC BAA-2100 / JCM 16839 / KCTC 5957 / BAV1)</name>
    <dbReference type="NCBI Taxonomy" id="216389"/>
    <lineage>
        <taxon>Bacteria</taxon>
        <taxon>Bacillati</taxon>
        <taxon>Chloroflexota</taxon>
        <taxon>Dehalococcoidia</taxon>
        <taxon>Dehalococcoidales</taxon>
        <taxon>Dehalococcoidaceae</taxon>
        <taxon>Dehalococcoides</taxon>
    </lineage>
</organism>
<dbReference type="EC" id="2.5.1.19" evidence="1"/>
<dbReference type="EMBL" id="CP000688">
    <property type="protein sequence ID" value="ABQ17025.1"/>
    <property type="molecule type" value="Genomic_DNA"/>
</dbReference>
<dbReference type="SMR" id="A5FRZ3"/>
<dbReference type="KEGG" id="deb:DehaBAV1_0440"/>
<dbReference type="PATRIC" id="fig|216389.18.peg.483"/>
<dbReference type="HOGENOM" id="CLU_024321_0_0_0"/>
<dbReference type="UniPathway" id="UPA00053">
    <property type="reaction ID" value="UER00089"/>
</dbReference>
<dbReference type="GO" id="GO:0005737">
    <property type="term" value="C:cytoplasm"/>
    <property type="evidence" value="ECO:0007669"/>
    <property type="project" value="UniProtKB-SubCell"/>
</dbReference>
<dbReference type="GO" id="GO:0003866">
    <property type="term" value="F:3-phosphoshikimate 1-carboxyvinyltransferase activity"/>
    <property type="evidence" value="ECO:0007669"/>
    <property type="project" value="UniProtKB-UniRule"/>
</dbReference>
<dbReference type="GO" id="GO:0008652">
    <property type="term" value="P:amino acid biosynthetic process"/>
    <property type="evidence" value="ECO:0007669"/>
    <property type="project" value="UniProtKB-KW"/>
</dbReference>
<dbReference type="GO" id="GO:0009073">
    <property type="term" value="P:aromatic amino acid family biosynthetic process"/>
    <property type="evidence" value="ECO:0007669"/>
    <property type="project" value="UniProtKB-KW"/>
</dbReference>
<dbReference type="GO" id="GO:0009423">
    <property type="term" value="P:chorismate biosynthetic process"/>
    <property type="evidence" value="ECO:0007669"/>
    <property type="project" value="UniProtKB-UniRule"/>
</dbReference>
<dbReference type="CDD" id="cd01556">
    <property type="entry name" value="EPSP_synthase"/>
    <property type="match status" value="1"/>
</dbReference>
<dbReference type="Gene3D" id="3.65.10.10">
    <property type="entry name" value="Enolpyruvate transferase domain"/>
    <property type="match status" value="2"/>
</dbReference>
<dbReference type="HAMAP" id="MF_00210">
    <property type="entry name" value="EPSP_synth"/>
    <property type="match status" value="1"/>
</dbReference>
<dbReference type="InterPro" id="IPR001986">
    <property type="entry name" value="Enolpyruvate_Tfrase_dom"/>
</dbReference>
<dbReference type="InterPro" id="IPR036968">
    <property type="entry name" value="Enolpyruvate_Tfrase_sf"/>
</dbReference>
<dbReference type="InterPro" id="IPR006264">
    <property type="entry name" value="EPSP_synthase"/>
</dbReference>
<dbReference type="InterPro" id="IPR023193">
    <property type="entry name" value="EPSP_synthase_CS"/>
</dbReference>
<dbReference type="InterPro" id="IPR013792">
    <property type="entry name" value="RNA3'P_cycl/enolpyr_Trfase_a/b"/>
</dbReference>
<dbReference type="NCBIfam" id="TIGR01356">
    <property type="entry name" value="aroA"/>
    <property type="match status" value="1"/>
</dbReference>
<dbReference type="PANTHER" id="PTHR21090">
    <property type="entry name" value="AROM/DEHYDROQUINATE SYNTHASE"/>
    <property type="match status" value="1"/>
</dbReference>
<dbReference type="PANTHER" id="PTHR21090:SF5">
    <property type="entry name" value="PENTAFUNCTIONAL AROM POLYPEPTIDE"/>
    <property type="match status" value="1"/>
</dbReference>
<dbReference type="Pfam" id="PF00275">
    <property type="entry name" value="EPSP_synthase"/>
    <property type="match status" value="1"/>
</dbReference>
<dbReference type="PIRSF" id="PIRSF000505">
    <property type="entry name" value="EPSPS"/>
    <property type="match status" value="1"/>
</dbReference>
<dbReference type="SUPFAM" id="SSF55205">
    <property type="entry name" value="EPT/RTPC-like"/>
    <property type="match status" value="1"/>
</dbReference>
<dbReference type="PROSITE" id="PS00885">
    <property type="entry name" value="EPSP_SYNTHASE_2"/>
    <property type="match status" value="1"/>
</dbReference>
<proteinExistence type="inferred from homology"/>